<protein>
    <recommendedName>
        <fullName evidence="4 9">Immunoglobulin kappa variable 1D-39</fullName>
    </recommendedName>
    <alternativeName>
        <fullName evidence="11">Ig kappa chain V-I region Daudi</fullName>
    </alternativeName>
</protein>
<name>KVD39_HUMAN</name>
<evidence type="ECO:0000250" key="1">
    <source>
        <dbReference type="UniProtKB" id="P01602"/>
    </source>
</evidence>
<evidence type="ECO:0000255" key="2"/>
<evidence type="ECO:0000255" key="3">
    <source>
        <dbReference type="PROSITE-ProRule" id="PRU00114"/>
    </source>
</evidence>
<evidence type="ECO:0000303" key="4">
    <source>
    </source>
</evidence>
<evidence type="ECO:0000303" key="5">
    <source>
    </source>
</evidence>
<evidence type="ECO:0000303" key="6">
    <source>
    </source>
</evidence>
<evidence type="ECO:0000303" key="7">
    <source>
    </source>
</evidence>
<evidence type="ECO:0000303" key="8">
    <source>
    </source>
</evidence>
<evidence type="ECO:0000303" key="9">
    <source ref="4"/>
</evidence>
<evidence type="ECO:0000305" key="10"/>
<evidence type="ECO:0000305" key="11">
    <source>
    </source>
</evidence>
<organism>
    <name type="scientific">Homo sapiens</name>
    <name type="common">Human</name>
    <dbReference type="NCBI Taxonomy" id="9606"/>
    <lineage>
        <taxon>Eukaryota</taxon>
        <taxon>Metazoa</taxon>
        <taxon>Chordata</taxon>
        <taxon>Craniata</taxon>
        <taxon>Vertebrata</taxon>
        <taxon>Euteleostomi</taxon>
        <taxon>Mammalia</taxon>
        <taxon>Eutheria</taxon>
        <taxon>Euarchontoglires</taxon>
        <taxon>Primates</taxon>
        <taxon>Haplorrhini</taxon>
        <taxon>Catarrhini</taxon>
        <taxon>Hominidae</taxon>
        <taxon>Homo</taxon>
    </lineage>
</organism>
<comment type="function">
    <text evidence="5 6 7 8">V region of the variable domain of immunoglobulin light chains that participates in the antigen recognition (PubMed:24600447). Immunoglobulins, also known as antibodies, are membrane-bound or secreted glycoproteins produced by B lymphocytes. In the recognition phase of humoral immunity, the membrane-bound immunoglobulins serve as receptors which, upon binding of a specific antigen, trigger the clonal expansion and differentiation of B lymphocytes into immunoglobulins-secreting plasma cells. Secreted immunoglobulins mediate the effector phase of humoral immunity, which results in the elimination of bound antigens (PubMed:20176268, PubMed:22158414). The antigen binding site is formed by the variable domain of one heavy chain, together with that of its associated light chain. Thus, each immunoglobulin has two antigen binding sites with remarkable affinity for a particular antigen. The variable domains are assembled by a process called V-(D)-J rearrangement and can then be subjected to somatic hypermutations which, after exposure to antigen and selection, allow affinity maturation for a particular antigen (PubMed:17576170, PubMed:20176268).</text>
</comment>
<comment type="subunit">
    <text evidence="6">Immunoglobulins are composed of two identical heavy chains and two identical light chains; disulfide-linked.</text>
</comment>
<comment type="subcellular location">
    <subcellularLocation>
        <location evidence="6 7">Secreted</location>
    </subcellularLocation>
    <subcellularLocation>
        <location evidence="6 7">Cell membrane</location>
    </subcellularLocation>
</comment>
<comment type="polymorphism">
    <text>There are several alleles. The sequence shown is that of IMGT allele IGKV1D-39*01.</text>
</comment>
<comment type="caution">
    <text evidence="10">For an example of a full-length immunoglobulin kappa light chain see AC P0DOX7.</text>
</comment>
<comment type="sequence caution" evidence="10">
    <conflict type="miscellaneous discrepancy">
        <sequence resource="EMBL-CDS" id="CAA25478"/>
    </conflict>
    <text>Chimeric DNA. A chimeric DNA corresponding to regions V and J of immunoglobulin kappa light chain.</text>
</comment>
<accession>P04432</accession>
<dbReference type="EMBL" id="X00966">
    <property type="protein sequence ID" value="CAA25478.1"/>
    <property type="status" value="ALT_SEQ"/>
    <property type="molecule type" value="Genomic_DNA"/>
</dbReference>
<dbReference type="EMBL" id="AC233264">
    <property type="status" value="NOT_ANNOTATED_CDS"/>
    <property type="molecule type" value="Genomic_DNA"/>
</dbReference>
<dbReference type="PIR" id="A01884">
    <property type="entry name" value="K1HUDI"/>
</dbReference>
<dbReference type="EMDB" id="EMD-15971"/>
<dbReference type="EMDB" id="EMD-22818"/>
<dbReference type="EMDB" id="EMD-23520"/>
<dbReference type="EMDB" id="EMD-24299"/>
<dbReference type="EMDB" id="EMD-24697"/>
<dbReference type="EMDB" id="EMD-24699"/>
<dbReference type="EMDB" id="EMD-25162"/>
<dbReference type="EMDB" id="EMD-25166"/>
<dbReference type="EMDB" id="EMD-25574"/>
<dbReference type="EMDB" id="EMD-25893"/>
<dbReference type="EMDB" id="EMD-25904"/>
<dbReference type="EMDB" id="EMD-27763"/>
<dbReference type="EMDB" id="EMD-28537"/>
<dbReference type="EMDB" id="EMD-28756"/>
<dbReference type="EMDB" id="EMD-30482"/>
<dbReference type="EMDB" id="EMD-30483"/>
<dbReference type="EMDB" id="EMD-30485"/>
<dbReference type="EMDB" id="EMD-30488"/>
<dbReference type="EMDB" id="EMD-30993"/>
<dbReference type="EMDB" id="EMD-30994"/>
<dbReference type="EMDB" id="EMD-32395"/>
<dbReference type="EMDB" id="EMD-32398"/>
<dbReference type="EMDB" id="EMD-32739"/>
<dbReference type="EMDB" id="EMD-32740"/>
<dbReference type="EMDB" id="EMD-32741"/>
<dbReference type="EMDB" id="EMD-32742"/>
<dbReference type="EMDB" id="EMD-32743"/>
<dbReference type="EMDB" id="EMD-32744"/>
<dbReference type="EMDB" id="EMD-32748"/>
<dbReference type="EMDB" id="EMD-32749"/>
<dbReference type="EMDB" id="EMD-33550"/>
<dbReference type="EMDB" id="EMD-33551"/>
<dbReference type="EMDB" id="EMD-34042"/>
<dbReference type="EMDB" id="EMD-36371"/>
<dbReference type="EMDB" id="EMD-36575"/>
<dbReference type="EMDB" id="EMD-38899"/>
<dbReference type="EMDB" id="EMD-39195"/>
<dbReference type="EMDB" id="EMD-39547"/>
<dbReference type="EMDB" id="EMD-41468"/>
<dbReference type="EMDB" id="EMD-41470"/>
<dbReference type="EMDB" id="EMD-41471"/>
<dbReference type="EMDB" id="EMD-41569"/>
<dbReference type="EMDB" id="EMD-8240"/>
<dbReference type="EMDB" id="EMD-8241"/>
<dbReference type="EMDB" id="EMD-8242"/>
<dbReference type="SMR" id="P04432"/>
<dbReference type="FunCoup" id="P04432">
    <property type="interactions" value="378"/>
</dbReference>
<dbReference type="IMGT_GENE-DB" id="IGKV1D-39"/>
<dbReference type="BioMuta" id="IGKV1D-39"/>
<dbReference type="DMDM" id="125780"/>
<dbReference type="jPOST" id="P04432"/>
<dbReference type="MassIVE" id="P04432"/>
<dbReference type="TopDownProteomics" id="P04432"/>
<dbReference type="Ensembl" id="ENST00000448155.2">
    <property type="protein sequence ID" value="ENSP00000406382.2"/>
    <property type="gene ID" value="ENSG00000251546.1"/>
</dbReference>
<dbReference type="AGR" id="HGNC:5756"/>
<dbReference type="GeneCards" id="IGKV1D-39"/>
<dbReference type="HGNC" id="HGNC:5756">
    <property type="gene designation" value="IGKV1D-39"/>
</dbReference>
<dbReference type="HPA" id="ENSG00000251546">
    <property type="expression patterns" value="Tissue enhanced (intestine, lymphoid tissue)"/>
</dbReference>
<dbReference type="neXtProt" id="NX_P04432"/>
<dbReference type="OpenTargets" id="ENSG00000242371"/>
<dbReference type="OpenTargets" id="ENSG00000251546"/>
<dbReference type="VEuPathDB" id="HostDB:ENSG00000251546"/>
<dbReference type="GeneTree" id="ENSGT00940000153048"/>
<dbReference type="InParanoid" id="P04432"/>
<dbReference type="OMA" id="CQQDYGY"/>
<dbReference type="OrthoDB" id="9629570at2759"/>
<dbReference type="PAN-GO" id="P04432">
    <property type="GO annotations" value="3 GO annotations based on evolutionary models"/>
</dbReference>
<dbReference type="PhylomeDB" id="P04432"/>
<dbReference type="PathwayCommons" id="P04432"/>
<dbReference type="Reactome" id="R-HSA-166663">
    <property type="pathway name" value="Initial triggering of complement"/>
</dbReference>
<dbReference type="Reactome" id="R-HSA-173623">
    <property type="pathway name" value="Classical antibody-mediated complement activation"/>
</dbReference>
<dbReference type="Reactome" id="R-HSA-198933">
    <property type="pathway name" value="Immunoregulatory interactions between a Lymphoid and a non-Lymphoid cell"/>
</dbReference>
<dbReference type="Reactome" id="R-HSA-202733">
    <property type="pathway name" value="Cell surface interactions at the vascular wall"/>
</dbReference>
<dbReference type="Reactome" id="R-HSA-2029481">
    <property type="pathway name" value="FCGR activation"/>
</dbReference>
<dbReference type="Reactome" id="R-HSA-2029482">
    <property type="pathway name" value="Regulation of actin dynamics for phagocytic cup formation"/>
</dbReference>
<dbReference type="Reactome" id="R-HSA-2029485">
    <property type="pathway name" value="Role of phospholipids in phagocytosis"/>
</dbReference>
<dbReference type="Reactome" id="R-HSA-2168880">
    <property type="pathway name" value="Scavenging of heme from plasma"/>
</dbReference>
<dbReference type="Reactome" id="R-HSA-2454202">
    <property type="pathway name" value="Fc epsilon receptor (FCERI) signaling"/>
</dbReference>
<dbReference type="Reactome" id="R-HSA-2730905">
    <property type="pathway name" value="Role of LAT2/NTAL/LAB on calcium mobilization"/>
</dbReference>
<dbReference type="Reactome" id="R-HSA-2871796">
    <property type="pathway name" value="FCERI mediated MAPK activation"/>
</dbReference>
<dbReference type="Reactome" id="R-HSA-2871809">
    <property type="pathway name" value="FCERI mediated Ca+2 mobilization"/>
</dbReference>
<dbReference type="Reactome" id="R-HSA-2871837">
    <property type="pathway name" value="FCERI mediated NF-kB activation"/>
</dbReference>
<dbReference type="Reactome" id="R-HSA-5690714">
    <property type="pathway name" value="CD22 mediated BCR regulation"/>
</dbReference>
<dbReference type="Reactome" id="R-HSA-9664323">
    <property type="pathway name" value="FCGR3A-mediated IL10 synthesis"/>
</dbReference>
<dbReference type="Reactome" id="R-HSA-9664422">
    <property type="pathway name" value="FCGR3A-mediated phagocytosis"/>
</dbReference>
<dbReference type="Reactome" id="R-HSA-9679191">
    <property type="pathway name" value="Potential therapeutics for SARS"/>
</dbReference>
<dbReference type="Reactome" id="R-HSA-977606">
    <property type="pathway name" value="Regulation of Complement cascade"/>
</dbReference>
<dbReference type="Reactome" id="R-HSA-983695">
    <property type="pathway name" value="Antigen activates B Cell Receptor (BCR) leading to generation of second messengers"/>
</dbReference>
<dbReference type="SignaLink" id="P04432"/>
<dbReference type="ChiTaRS" id="IGKV1D-39">
    <property type="organism name" value="human"/>
</dbReference>
<dbReference type="Pharos" id="P04432">
    <property type="development level" value="Tdark"/>
</dbReference>
<dbReference type="PRO" id="PR:P04432"/>
<dbReference type="Proteomes" id="UP000005640">
    <property type="component" value="Chromosome 2"/>
</dbReference>
<dbReference type="RNAct" id="P04432">
    <property type="molecule type" value="protein"/>
</dbReference>
<dbReference type="Bgee" id="ENSG00000251546">
    <property type="expression patterns" value="Expressed in rectum and 89 other cell types or tissues"/>
</dbReference>
<dbReference type="GO" id="GO:0005576">
    <property type="term" value="C:extracellular region"/>
    <property type="evidence" value="ECO:0000304"/>
    <property type="project" value="Reactome"/>
</dbReference>
<dbReference type="GO" id="GO:0019814">
    <property type="term" value="C:immunoglobulin complex"/>
    <property type="evidence" value="ECO:0000318"/>
    <property type="project" value="GO_Central"/>
</dbReference>
<dbReference type="GO" id="GO:0005886">
    <property type="term" value="C:plasma membrane"/>
    <property type="evidence" value="ECO:0000304"/>
    <property type="project" value="Reactome"/>
</dbReference>
<dbReference type="GO" id="GO:0003823">
    <property type="term" value="F:antigen binding"/>
    <property type="evidence" value="ECO:0000303"/>
    <property type="project" value="UniProtKB"/>
</dbReference>
<dbReference type="GO" id="GO:0002250">
    <property type="term" value="P:adaptive immune response"/>
    <property type="evidence" value="ECO:0007669"/>
    <property type="project" value="UniProtKB-KW"/>
</dbReference>
<dbReference type="GO" id="GO:0006955">
    <property type="term" value="P:immune response"/>
    <property type="evidence" value="ECO:0000318"/>
    <property type="project" value="GO_Central"/>
</dbReference>
<dbReference type="CDD" id="cd04980">
    <property type="entry name" value="IgV_L_kappa"/>
    <property type="match status" value="1"/>
</dbReference>
<dbReference type="FunFam" id="2.60.40.10:FF:000212">
    <property type="entry name" value="Immunoglobulin kappa chain variable 12-38"/>
    <property type="match status" value="1"/>
</dbReference>
<dbReference type="Gene3D" id="2.60.40.10">
    <property type="entry name" value="Immunoglobulins"/>
    <property type="match status" value="1"/>
</dbReference>
<dbReference type="InterPro" id="IPR007110">
    <property type="entry name" value="Ig-like_dom"/>
</dbReference>
<dbReference type="InterPro" id="IPR036179">
    <property type="entry name" value="Ig-like_dom_sf"/>
</dbReference>
<dbReference type="InterPro" id="IPR013783">
    <property type="entry name" value="Ig-like_fold"/>
</dbReference>
<dbReference type="InterPro" id="IPR003599">
    <property type="entry name" value="Ig_sub"/>
</dbReference>
<dbReference type="InterPro" id="IPR013106">
    <property type="entry name" value="Ig_V-set"/>
</dbReference>
<dbReference type="InterPro" id="IPR050150">
    <property type="entry name" value="IgV_Light_Chain"/>
</dbReference>
<dbReference type="PANTHER" id="PTHR23267">
    <property type="entry name" value="IMMUNOGLOBULIN LIGHT CHAIN"/>
    <property type="match status" value="1"/>
</dbReference>
<dbReference type="Pfam" id="PF07686">
    <property type="entry name" value="V-set"/>
    <property type="match status" value="1"/>
</dbReference>
<dbReference type="SMART" id="SM00409">
    <property type="entry name" value="IG"/>
    <property type="match status" value="1"/>
</dbReference>
<dbReference type="SMART" id="SM00406">
    <property type="entry name" value="IGv"/>
    <property type="match status" value="1"/>
</dbReference>
<dbReference type="SUPFAM" id="SSF48726">
    <property type="entry name" value="Immunoglobulin"/>
    <property type="match status" value="1"/>
</dbReference>
<dbReference type="PROSITE" id="PS50835">
    <property type="entry name" value="IG_LIKE"/>
    <property type="match status" value="1"/>
</dbReference>
<gene>
    <name evidence="4 9" type="primary">IGKV1D-39</name>
</gene>
<feature type="signal peptide" evidence="2">
    <location>
        <begin position="1"/>
        <end position="22"/>
    </location>
</feature>
<feature type="chain" id="PRO_0000015171" description="Immunoglobulin kappa variable 1D-39" evidence="2">
    <location>
        <begin position="23"/>
        <end position="117"/>
    </location>
</feature>
<feature type="domain" description="Ig-like" evidence="3">
    <location>
        <begin position="24"/>
        <end position="117" status="greater than"/>
    </location>
</feature>
<feature type="region of interest" description="Framework-1" evidence="1">
    <location>
        <begin position="23"/>
        <end position="45"/>
    </location>
</feature>
<feature type="region of interest" description="Complementarity-determining-1" evidence="1">
    <location>
        <begin position="46"/>
        <end position="56"/>
    </location>
</feature>
<feature type="region of interest" description="Framework-2" evidence="1">
    <location>
        <begin position="57"/>
        <end position="71"/>
    </location>
</feature>
<feature type="region of interest" description="Complementarity-determining-2" evidence="1">
    <location>
        <begin position="72"/>
        <end position="78"/>
    </location>
</feature>
<feature type="region of interest" description="Framework-3" evidence="1">
    <location>
        <begin position="79"/>
        <end position="110"/>
    </location>
</feature>
<feature type="region of interest" description="Complementarity-determining-3" evidence="1">
    <location>
        <begin position="111"/>
        <end position="117" status="greater than"/>
    </location>
</feature>
<feature type="disulfide bond" evidence="3">
    <location>
        <begin position="45"/>
        <end position="110"/>
    </location>
</feature>
<feature type="sequence conflict" description="In Ref. 1; CAA25478." evidence="10" ref="1">
    <original>GA</original>
    <variation>RV</variation>
    <location>
        <begin position="19"/>
        <end position="20"/>
    </location>
</feature>
<feature type="sequence conflict" description="In Ref. 1; CAA25478." evidence="10" ref="1">
    <original>SQSISSYLN</original>
    <variation>GHNITNFLS</variation>
    <location>
        <begin position="48"/>
        <end position="56"/>
    </location>
</feature>
<feature type="sequence conflict" description="In Ref. 1; CAA25478." evidence="10" ref="1">
    <original>K</original>
    <variation>T</variation>
    <location>
        <position position="67"/>
    </location>
</feature>
<feature type="sequence conflict" description="In Ref. 1; CAA25478." evidence="10" ref="1">
    <original>ASS</original>
    <variation>VSN</variation>
    <location>
        <begin position="73"/>
        <end position="75"/>
    </location>
</feature>
<feature type="sequence conflict" description="In Ref. 1; CAA25478." evidence="10" ref="1">
    <original>S</original>
    <variation>V</variation>
    <location>
        <position position="78"/>
    </location>
</feature>
<feature type="sequence conflict" description="In Ref. 1; CAA25478." evidence="10" ref="1">
    <original>TD</original>
    <variation>AE</variation>
    <location>
        <begin position="91"/>
        <end position="92"/>
    </location>
</feature>
<feature type="sequence conflict" description="In Ref. 1; CAA25478." evidence="10" ref="1">
    <original>SYSTP</original>
    <variation>NYNFS</variation>
    <location>
        <begin position="113"/>
        <end position="117"/>
    </location>
</feature>
<feature type="non-terminal residue">
    <location>
        <position position="117"/>
    </location>
</feature>
<keyword id="KW-1064">Adaptive immunity</keyword>
<keyword id="KW-1003">Cell membrane</keyword>
<keyword id="KW-1015">Disulfide bond</keyword>
<keyword id="KW-0391">Immunity</keyword>
<keyword id="KW-1280">Immunoglobulin</keyword>
<keyword id="KW-0393">Immunoglobulin domain</keyword>
<keyword id="KW-0472">Membrane</keyword>
<keyword id="KW-1185">Reference proteome</keyword>
<keyword id="KW-0964">Secreted</keyword>
<keyword id="KW-0732">Signal</keyword>
<reference key="1">
    <citation type="journal article" date="1984" name="Nucleic Acids Res.">
        <title>Immunoglobulin genes of the kappa light chain type from two human lymphoid cell lines are closely related.</title>
        <authorList>
            <person name="Klobeck H.G."/>
            <person name="Combriato G."/>
            <person name="Zachau H.G."/>
        </authorList>
    </citation>
    <scope>NUCLEOTIDE SEQUENCE [GENOMIC DNA]</scope>
</reference>
<reference key="2">
    <citation type="journal article" date="2005" name="Nature">
        <title>Generation and annotation of the DNA sequences of human chromosomes 2 and 4.</title>
        <authorList>
            <person name="Hillier L.W."/>
            <person name="Graves T.A."/>
            <person name="Fulton R.S."/>
            <person name="Fulton L.A."/>
            <person name="Pepin K.H."/>
            <person name="Minx P."/>
            <person name="Wagner-McPherson C."/>
            <person name="Layman D."/>
            <person name="Wylie K."/>
            <person name="Sekhon M."/>
            <person name="Becker M.C."/>
            <person name="Fewell G.A."/>
            <person name="Delehaunty K.D."/>
            <person name="Miner T.L."/>
            <person name="Nash W.E."/>
            <person name="Kremitzki C."/>
            <person name="Oddy L."/>
            <person name="Du H."/>
            <person name="Sun H."/>
            <person name="Bradshaw-Cordum H."/>
            <person name="Ali J."/>
            <person name="Carter J."/>
            <person name="Cordes M."/>
            <person name="Harris A."/>
            <person name="Isak A."/>
            <person name="van Brunt A."/>
            <person name="Nguyen C."/>
            <person name="Du F."/>
            <person name="Courtney L."/>
            <person name="Kalicki J."/>
            <person name="Ozersky P."/>
            <person name="Abbott S."/>
            <person name="Armstrong J."/>
            <person name="Belter E.A."/>
            <person name="Caruso L."/>
            <person name="Cedroni M."/>
            <person name="Cotton M."/>
            <person name="Davidson T."/>
            <person name="Desai A."/>
            <person name="Elliott G."/>
            <person name="Erb T."/>
            <person name="Fronick C."/>
            <person name="Gaige T."/>
            <person name="Haakenson W."/>
            <person name="Haglund K."/>
            <person name="Holmes A."/>
            <person name="Harkins R."/>
            <person name="Kim K."/>
            <person name="Kruchowski S.S."/>
            <person name="Strong C.M."/>
            <person name="Grewal N."/>
            <person name="Goyea E."/>
            <person name="Hou S."/>
            <person name="Levy A."/>
            <person name="Martinka S."/>
            <person name="Mead K."/>
            <person name="McLellan M.D."/>
            <person name="Meyer R."/>
            <person name="Randall-Maher J."/>
            <person name="Tomlinson C."/>
            <person name="Dauphin-Kohlberg S."/>
            <person name="Kozlowicz-Reilly A."/>
            <person name="Shah N."/>
            <person name="Swearengen-Shahid S."/>
            <person name="Snider J."/>
            <person name="Strong J.T."/>
            <person name="Thompson J."/>
            <person name="Yoakum M."/>
            <person name="Leonard S."/>
            <person name="Pearman C."/>
            <person name="Trani L."/>
            <person name="Radionenko M."/>
            <person name="Waligorski J.E."/>
            <person name="Wang C."/>
            <person name="Rock S.M."/>
            <person name="Tin-Wollam A.-M."/>
            <person name="Maupin R."/>
            <person name="Latreille P."/>
            <person name="Wendl M.C."/>
            <person name="Yang S.-P."/>
            <person name="Pohl C."/>
            <person name="Wallis J.W."/>
            <person name="Spieth J."/>
            <person name="Bieri T.A."/>
            <person name="Berkowicz N."/>
            <person name="Nelson J.O."/>
            <person name="Osborne J."/>
            <person name="Ding L."/>
            <person name="Meyer R."/>
            <person name="Sabo A."/>
            <person name="Shotland Y."/>
            <person name="Sinha P."/>
            <person name="Wohldmann P.E."/>
            <person name="Cook L.L."/>
            <person name="Hickenbotham M.T."/>
            <person name="Eldred J."/>
            <person name="Williams D."/>
            <person name="Jones T.A."/>
            <person name="She X."/>
            <person name="Ciccarelli F.D."/>
            <person name="Izaurralde E."/>
            <person name="Taylor J."/>
            <person name="Schmutz J."/>
            <person name="Myers R.M."/>
            <person name="Cox D.R."/>
            <person name="Huang X."/>
            <person name="McPherson J.D."/>
            <person name="Mardis E.R."/>
            <person name="Clifton S.W."/>
            <person name="Warren W.C."/>
            <person name="Chinwalla A.T."/>
            <person name="Eddy S.R."/>
            <person name="Marra M.A."/>
            <person name="Ovcharenko I."/>
            <person name="Furey T.S."/>
            <person name="Miller W."/>
            <person name="Eichler E.E."/>
            <person name="Bork P."/>
            <person name="Suyama M."/>
            <person name="Torrents D."/>
            <person name="Waterston R.H."/>
            <person name="Wilson R.K."/>
        </authorList>
    </citation>
    <scope>NUCLEOTIDE SEQUENCE [LARGE SCALE GENOMIC DNA] (IMGT ALLELE IGKV1D-39*01)</scope>
</reference>
<reference key="3">
    <citation type="journal article" date="2001" name="Exp. Clin. Immunogenet.">
        <title>Nomenclature of the human immunoglobulin kappa (IGK) genes.</title>
        <authorList>
            <person name="Lefranc M.P."/>
        </authorList>
    </citation>
    <scope>NOMEMCLATURE</scope>
</reference>
<reference key="4">
    <citation type="book" date="2001" name="The Immunoglobulin FactsBook.">
        <title>The Immunoglobulin FactsBook.</title>
        <editorList>
            <person name="Lefranc M.P."/>
            <person name="Lefranc G."/>
        </editorList>
        <authorList>
            <person name="Lefranc M.P."/>
            <person name="Lefranc G."/>
        </authorList>
    </citation>
    <scope>NOMENCLATURE</scope>
</reference>
<reference key="5">
    <citation type="journal article" date="2007" name="Annu. Rev. Genet.">
        <title>Immunoglobulin somatic hypermutation.</title>
        <authorList>
            <person name="Teng G."/>
            <person name="Papavasiliou F.N."/>
        </authorList>
    </citation>
    <scope>REVIEW ON SOMATIC HYPERMUTATION</scope>
</reference>
<reference key="6">
    <citation type="journal article" date="2010" name="J. Allergy Clin. Immunol.">
        <title>Structure and function of immunoglobulins.</title>
        <authorList>
            <person name="Schroeder H.W. Jr."/>
            <person name="Cavacini L."/>
        </authorList>
    </citation>
    <scope>REVIEW ON IMMUNOGLOBULINS</scope>
</reference>
<reference key="7">
    <citation type="journal article" date="2012" name="Nat. Rev. Immunol.">
        <title>Molecular programming of B cell memory.</title>
        <authorList>
            <person name="McHeyzer-Williams M."/>
            <person name="Okitsu S."/>
            <person name="Wang N."/>
            <person name="McHeyzer-Williams L."/>
        </authorList>
    </citation>
    <scope>REVIEW ON FUNCTION</scope>
</reference>
<reference key="8">
    <citation type="journal article" date="2014" name="Front. Immunol.">
        <title>Immunoglobulin and T Cell Receptor Genes: IMGT((R)) and the Birth and Rise of Immunoinformatics.</title>
        <authorList>
            <person name="Lefranc M.P."/>
        </authorList>
    </citation>
    <scope>NOMENCLATURE</scope>
</reference>
<sequence>MDMRVPAQLLGLLLLWLRGARCDIQMTQSPSSLSASVGDRVTITCRASQSISSYLNWYQQKPGKAPKLLIYAASSLQSGVPSRFSGSGSGTDFTLTISSLQPEDFATYYCQQSYSTP</sequence>
<proteinExistence type="inferred from homology"/>